<protein>
    <recommendedName>
        <fullName>DDRGK domain-containing protein 1</fullName>
    </recommendedName>
</protein>
<feature type="chain" id="PRO_0000391859" description="DDRGK domain-containing protein 1">
    <location>
        <begin position="1"/>
        <end position="303"/>
    </location>
</feature>
<feature type="topological domain" description="Lumenal" evidence="5">
    <location>
        <begin position="1"/>
        <end position="2"/>
    </location>
</feature>
<feature type="transmembrane region" description="Helical" evidence="3">
    <location>
        <begin position="3"/>
        <end position="23"/>
    </location>
</feature>
<feature type="topological domain" description="Cytoplasmic" evidence="5">
    <location>
        <begin position="24"/>
        <end position="303"/>
    </location>
</feature>
<feature type="region of interest" description="Disordered" evidence="4">
    <location>
        <begin position="31"/>
        <end position="53"/>
    </location>
</feature>
<feature type="region of interest" description="Disordered" evidence="4">
    <location>
        <begin position="84"/>
        <end position="160"/>
    </location>
</feature>
<feature type="compositionally biased region" description="Basic and acidic residues" evidence="4">
    <location>
        <begin position="106"/>
        <end position="160"/>
    </location>
</feature>
<keyword id="KW-0256">Endoplasmic reticulum</keyword>
<keyword id="KW-0472">Membrane</keyword>
<keyword id="KW-1185">Reference proteome</keyword>
<keyword id="KW-0812">Transmembrane</keyword>
<keyword id="KW-1133">Transmembrane helix</keyword>
<keyword id="KW-0833">Ubl conjugation pathway</keyword>
<evidence type="ECO:0000250" key="1">
    <source>
        <dbReference type="UniProtKB" id="Q96HY6"/>
    </source>
</evidence>
<evidence type="ECO:0000250" key="2">
    <source>
        <dbReference type="UniProtKB" id="Q9VDD1"/>
    </source>
</evidence>
<evidence type="ECO:0000255" key="3"/>
<evidence type="ECO:0000256" key="4">
    <source>
        <dbReference type="SAM" id="MobiDB-lite"/>
    </source>
</evidence>
<evidence type="ECO:0000305" key="5"/>
<dbReference type="EMBL" id="CH916369">
    <property type="protein sequence ID" value="EDV93602.1"/>
    <property type="molecule type" value="Genomic_DNA"/>
</dbReference>
<dbReference type="SMR" id="B4JG35"/>
<dbReference type="FunCoup" id="B4JG35">
    <property type="interactions" value="585"/>
</dbReference>
<dbReference type="STRING" id="7222.B4JG35"/>
<dbReference type="EnsemblMetazoa" id="FBtr0154822">
    <property type="protein sequence ID" value="FBpp0153314"/>
    <property type="gene ID" value="FBgn0126873"/>
</dbReference>
<dbReference type="EnsemblMetazoa" id="XM_001990504.3">
    <property type="protein sequence ID" value="XP_001990540.1"/>
    <property type="gene ID" value="LOC6563510"/>
</dbReference>
<dbReference type="GeneID" id="6563510"/>
<dbReference type="KEGG" id="dgr:6563510"/>
<dbReference type="CTD" id="65992"/>
<dbReference type="eggNOG" id="KOG3054">
    <property type="taxonomic scope" value="Eukaryota"/>
</dbReference>
<dbReference type="HOGENOM" id="CLU_059562_1_0_1"/>
<dbReference type="InParanoid" id="B4JG35"/>
<dbReference type="OMA" id="EFTRECN"/>
<dbReference type="OrthoDB" id="2285710at2759"/>
<dbReference type="PhylomeDB" id="B4JG35"/>
<dbReference type="Proteomes" id="UP000001070">
    <property type="component" value="Unassembled WGS sequence"/>
</dbReference>
<dbReference type="GO" id="GO:0005789">
    <property type="term" value="C:endoplasmic reticulum membrane"/>
    <property type="evidence" value="ECO:0007669"/>
    <property type="project" value="UniProtKB-SubCell"/>
</dbReference>
<dbReference type="GO" id="GO:0044389">
    <property type="term" value="F:ubiquitin-like protein ligase binding"/>
    <property type="evidence" value="ECO:0007669"/>
    <property type="project" value="TreeGrafter"/>
</dbReference>
<dbReference type="FunFam" id="1.10.10.10:FF:000143">
    <property type="entry name" value="DDRGK domain-containing protein 1"/>
    <property type="match status" value="1"/>
</dbReference>
<dbReference type="Gene3D" id="1.10.10.10">
    <property type="entry name" value="Winged helix-like DNA-binding domain superfamily/Winged helix DNA-binding domain"/>
    <property type="match status" value="1"/>
</dbReference>
<dbReference type="InterPro" id="IPR019153">
    <property type="entry name" value="DDRGK_dom-contain"/>
</dbReference>
<dbReference type="InterPro" id="IPR050899">
    <property type="entry name" value="DDRGK_domain-containing"/>
</dbReference>
<dbReference type="InterPro" id="IPR036388">
    <property type="entry name" value="WH-like_DNA-bd_sf"/>
</dbReference>
<dbReference type="InterPro" id="IPR036390">
    <property type="entry name" value="WH_DNA-bd_sf"/>
</dbReference>
<dbReference type="PANTHER" id="PTHR48176">
    <property type="entry name" value="DDRGK DOMAIN-CONTAINING PROTEIN 1"/>
    <property type="match status" value="1"/>
</dbReference>
<dbReference type="PANTHER" id="PTHR48176:SF1">
    <property type="entry name" value="DDRGK DOMAIN-CONTAINING PROTEIN 1"/>
    <property type="match status" value="1"/>
</dbReference>
<dbReference type="Pfam" id="PF09756">
    <property type="entry name" value="DDRGK"/>
    <property type="match status" value="1"/>
</dbReference>
<dbReference type="SMART" id="SM01128">
    <property type="entry name" value="DDRGK"/>
    <property type="match status" value="1"/>
</dbReference>
<dbReference type="SUPFAM" id="SSF46785">
    <property type="entry name" value="Winged helix' DNA-binding domain"/>
    <property type="match status" value="1"/>
</dbReference>
<name>DDRGK_DROGR</name>
<proteinExistence type="inferred from homology"/>
<reference key="1">
    <citation type="journal article" date="2007" name="Nature">
        <title>Evolution of genes and genomes on the Drosophila phylogeny.</title>
        <authorList>
            <consortium name="Drosophila 12 genomes consortium"/>
        </authorList>
    </citation>
    <scope>NUCLEOTIDE SEQUENCE [LARGE SCALE GENOMIC DNA]</scope>
    <source>
        <strain>Tucson 15287-2541.00</strain>
    </source>
</reference>
<organism>
    <name type="scientific">Drosophila grimshawi</name>
    <name type="common">Hawaiian fruit fly</name>
    <name type="synonym">Idiomyia grimshawi</name>
    <dbReference type="NCBI Taxonomy" id="7222"/>
    <lineage>
        <taxon>Eukaryota</taxon>
        <taxon>Metazoa</taxon>
        <taxon>Ecdysozoa</taxon>
        <taxon>Arthropoda</taxon>
        <taxon>Hexapoda</taxon>
        <taxon>Insecta</taxon>
        <taxon>Pterygota</taxon>
        <taxon>Neoptera</taxon>
        <taxon>Endopterygota</taxon>
        <taxon>Diptera</taxon>
        <taxon>Brachycera</taxon>
        <taxon>Muscomorpha</taxon>
        <taxon>Ephydroidea</taxon>
        <taxon>Drosophilidae</taxon>
        <taxon>Drosophila</taxon>
        <taxon>Hawaiian Drosophila</taxon>
    </lineage>
</organism>
<sequence>MDLILLIGIATALLIILLTLYFLQKRNAPAETKAAAQPQRGVPLRAQEGVPRRAQIARNQRNRLRANQNAPDAVAPVAAAPAAAIDPDGDEDGDENGPRVPQGAVLDEKMGAKKRAKMEAKEQKRLQREQELHDREQRKVKEAKEEAERKQQDDLDAEVERKRVEAERVVKELHERKEHEMYLKMKATFSVEEEGFEEDDADDKEADFIQYIKDNKVVLLEDLATTFKLKTQQAIERIQELQAEDTITGVIDDRGKFIYVSEAELAAVAKFIKQRGRVSIADLAESSNNLINLTPVTASEGGA</sequence>
<comment type="function">
    <text evidence="1 2">Substrate adapter for ufmylation, the covalent attachment of the ubiquitin-like modifier UFM1 to substrate proteins (By similarity). Required for ufmylation of Atg9; protects the nervous system during aging, possibly by stabilizing Atg9 and supporting its function (By similarity).</text>
</comment>
<comment type="subunit">
    <text evidence="2">Interacts with Atg9; the interaction is transient.</text>
</comment>
<comment type="subcellular location">
    <subcellularLocation>
        <location evidence="1">Endoplasmic reticulum membrane</location>
        <topology evidence="3">Single-pass membrane protein</topology>
    </subcellularLocation>
</comment>
<comment type="similarity">
    <text evidence="5">Belongs to the DDRGK1 family.</text>
</comment>
<accession>B4JG35</accession>
<gene>
    <name evidence="2" type="primary">Ddrgk1</name>
    <name type="ORF">GH19408</name>
</gene>